<dbReference type="EC" id="2.7.1.48" evidence="1"/>
<dbReference type="EMBL" id="CP000485">
    <property type="protein sequence ID" value="ABK87186.1"/>
    <property type="molecule type" value="Genomic_DNA"/>
</dbReference>
<dbReference type="RefSeq" id="WP_000537085.1">
    <property type="nucleotide sequence ID" value="NC_008600.1"/>
</dbReference>
<dbReference type="SMR" id="A0RIZ3"/>
<dbReference type="KEGG" id="btl:BALH_3965"/>
<dbReference type="HOGENOM" id="CLU_021278_1_2_9"/>
<dbReference type="UniPathway" id="UPA00574">
    <property type="reaction ID" value="UER00637"/>
</dbReference>
<dbReference type="UniPathway" id="UPA00579">
    <property type="reaction ID" value="UER00640"/>
</dbReference>
<dbReference type="GO" id="GO:0005737">
    <property type="term" value="C:cytoplasm"/>
    <property type="evidence" value="ECO:0007669"/>
    <property type="project" value="UniProtKB-SubCell"/>
</dbReference>
<dbReference type="GO" id="GO:0005524">
    <property type="term" value="F:ATP binding"/>
    <property type="evidence" value="ECO:0007669"/>
    <property type="project" value="UniProtKB-UniRule"/>
</dbReference>
<dbReference type="GO" id="GO:0043771">
    <property type="term" value="F:cytidine kinase activity"/>
    <property type="evidence" value="ECO:0007669"/>
    <property type="project" value="RHEA"/>
</dbReference>
<dbReference type="GO" id="GO:0004849">
    <property type="term" value="F:uridine kinase activity"/>
    <property type="evidence" value="ECO:0007669"/>
    <property type="project" value="UniProtKB-UniRule"/>
</dbReference>
<dbReference type="GO" id="GO:0044211">
    <property type="term" value="P:CTP salvage"/>
    <property type="evidence" value="ECO:0007669"/>
    <property type="project" value="UniProtKB-UniRule"/>
</dbReference>
<dbReference type="GO" id="GO:0044206">
    <property type="term" value="P:UMP salvage"/>
    <property type="evidence" value="ECO:0007669"/>
    <property type="project" value="UniProtKB-UniRule"/>
</dbReference>
<dbReference type="CDD" id="cd02023">
    <property type="entry name" value="UMPK"/>
    <property type="match status" value="1"/>
</dbReference>
<dbReference type="Gene3D" id="3.40.50.300">
    <property type="entry name" value="P-loop containing nucleotide triphosphate hydrolases"/>
    <property type="match status" value="1"/>
</dbReference>
<dbReference type="HAMAP" id="MF_00551">
    <property type="entry name" value="Uridine_kinase"/>
    <property type="match status" value="1"/>
</dbReference>
<dbReference type="InterPro" id="IPR027417">
    <property type="entry name" value="P-loop_NTPase"/>
</dbReference>
<dbReference type="InterPro" id="IPR006083">
    <property type="entry name" value="PRK/URK"/>
</dbReference>
<dbReference type="InterPro" id="IPR026008">
    <property type="entry name" value="Uridine_kinase"/>
</dbReference>
<dbReference type="InterPro" id="IPR000764">
    <property type="entry name" value="Uridine_kinase-like"/>
</dbReference>
<dbReference type="NCBIfam" id="NF004018">
    <property type="entry name" value="PRK05480.1"/>
    <property type="match status" value="1"/>
</dbReference>
<dbReference type="NCBIfam" id="TIGR00235">
    <property type="entry name" value="udk"/>
    <property type="match status" value="1"/>
</dbReference>
<dbReference type="PANTHER" id="PTHR10285">
    <property type="entry name" value="URIDINE KINASE"/>
    <property type="match status" value="1"/>
</dbReference>
<dbReference type="Pfam" id="PF00485">
    <property type="entry name" value="PRK"/>
    <property type="match status" value="1"/>
</dbReference>
<dbReference type="PRINTS" id="PR00988">
    <property type="entry name" value="URIDINKINASE"/>
</dbReference>
<dbReference type="SUPFAM" id="SSF52540">
    <property type="entry name" value="P-loop containing nucleoside triphosphate hydrolases"/>
    <property type="match status" value="1"/>
</dbReference>
<reference key="1">
    <citation type="journal article" date="2007" name="J. Bacteriol.">
        <title>The complete genome sequence of Bacillus thuringiensis Al Hakam.</title>
        <authorList>
            <person name="Challacombe J.F."/>
            <person name="Altherr M.R."/>
            <person name="Xie G."/>
            <person name="Bhotika S.S."/>
            <person name="Brown N."/>
            <person name="Bruce D."/>
            <person name="Campbell C.S."/>
            <person name="Campbell M.L."/>
            <person name="Chen J."/>
            <person name="Chertkov O."/>
            <person name="Cleland C."/>
            <person name="Dimitrijevic M."/>
            <person name="Doggett N.A."/>
            <person name="Fawcett J.J."/>
            <person name="Glavina T."/>
            <person name="Goodwin L.A."/>
            <person name="Green L.D."/>
            <person name="Han C.S."/>
            <person name="Hill K.K."/>
            <person name="Hitchcock P."/>
            <person name="Jackson P.J."/>
            <person name="Keim P."/>
            <person name="Kewalramani A.R."/>
            <person name="Longmire J."/>
            <person name="Lucas S."/>
            <person name="Malfatti S."/>
            <person name="Martinez D."/>
            <person name="McMurry K."/>
            <person name="Meincke L.J."/>
            <person name="Misra M."/>
            <person name="Moseman B.L."/>
            <person name="Mundt M."/>
            <person name="Munk A.C."/>
            <person name="Okinaka R.T."/>
            <person name="Parson-Quintana B."/>
            <person name="Reilly L.P."/>
            <person name="Richardson P."/>
            <person name="Robinson D.L."/>
            <person name="Saunders E."/>
            <person name="Tapia R."/>
            <person name="Tesmer J.G."/>
            <person name="Thayer N."/>
            <person name="Thompson L.S."/>
            <person name="Tice H."/>
            <person name="Ticknor L.O."/>
            <person name="Wills P.L."/>
            <person name="Gilna P."/>
            <person name="Brettin T.S."/>
        </authorList>
    </citation>
    <scope>NUCLEOTIDE SEQUENCE [LARGE SCALE GENOMIC DNA]</scope>
    <source>
        <strain>Al Hakam</strain>
    </source>
</reference>
<accession>A0RIZ3</accession>
<protein>
    <recommendedName>
        <fullName evidence="1">Uridine kinase</fullName>
        <ecNumber evidence="1">2.7.1.48</ecNumber>
    </recommendedName>
    <alternativeName>
        <fullName evidence="1">Cytidine monophosphokinase</fullName>
    </alternativeName>
    <alternativeName>
        <fullName evidence="1">Uridine monophosphokinase</fullName>
    </alternativeName>
</protein>
<organism>
    <name type="scientific">Bacillus thuringiensis (strain Al Hakam)</name>
    <dbReference type="NCBI Taxonomy" id="412694"/>
    <lineage>
        <taxon>Bacteria</taxon>
        <taxon>Bacillati</taxon>
        <taxon>Bacillota</taxon>
        <taxon>Bacilli</taxon>
        <taxon>Bacillales</taxon>
        <taxon>Bacillaceae</taxon>
        <taxon>Bacillus</taxon>
        <taxon>Bacillus cereus group</taxon>
    </lineage>
</organism>
<evidence type="ECO:0000255" key="1">
    <source>
        <dbReference type="HAMAP-Rule" id="MF_00551"/>
    </source>
</evidence>
<name>URK_BACAH</name>
<gene>
    <name evidence="1" type="primary">udk</name>
    <name type="ordered locus">BALH_3965</name>
</gene>
<proteinExistence type="inferred from homology"/>
<keyword id="KW-0067">ATP-binding</keyword>
<keyword id="KW-0963">Cytoplasm</keyword>
<keyword id="KW-0418">Kinase</keyword>
<keyword id="KW-0547">Nucleotide-binding</keyword>
<keyword id="KW-0808">Transferase</keyword>
<sequence length="212" mass="24338">MGTNKPVVIGIAGGSGSGKTSVTKAIFDHFKGHSILILEQDYYYKDQSHLPMEERLKTNYDHPLAFDNDLLIEHLQQLLAYKQVDKPVYDYTLHTRSEEIIPVEPKDVIILEGILILEDPRLCELMDIKLFVDTDADLRILRRMQRDIKERGRTMDSVIDQYVNVVRPMHNQFIEPSKKFADIIIPEGGQNHVAIDIMVTKIATILEQKVNL</sequence>
<comment type="catalytic activity">
    <reaction evidence="1">
        <text>uridine + ATP = UMP + ADP + H(+)</text>
        <dbReference type="Rhea" id="RHEA:16825"/>
        <dbReference type="ChEBI" id="CHEBI:15378"/>
        <dbReference type="ChEBI" id="CHEBI:16704"/>
        <dbReference type="ChEBI" id="CHEBI:30616"/>
        <dbReference type="ChEBI" id="CHEBI:57865"/>
        <dbReference type="ChEBI" id="CHEBI:456216"/>
        <dbReference type="EC" id="2.7.1.48"/>
    </reaction>
</comment>
<comment type="catalytic activity">
    <reaction evidence="1">
        <text>cytidine + ATP = CMP + ADP + H(+)</text>
        <dbReference type="Rhea" id="RHEA:24674"/>
        <dbReference type="ChEBI" id="CHEBI:15378"/>
        <dbReference type="ChEBI" id="CHEBI:17562"/>
        <dbReference type="ChEBI" id="CHEBI:30616"/>
        <dbReference type="ChEBI" id="CHEBI:60377"/>
        <dbReference type="ChEBI" id="CHEBI:456216"/>
        <dbReference type="EC" id="2.7.1.48"/>
    </reaction>
</comment>
<comment type="pathway">
    <text evidence="1">Pyrimidine metabolism; CTP biosynthesis via salvage pathway; CTP from cytidine: step 1/3.</text>
</comment>
<comment type="pathway">
    <text evidence="1">Pyrimidine metabolism; UMP biosynthesis via salvage pathway; UMP from uridine: step 1/1.</text>
</comment>
<comment type="subcellular location">
    <subcellularLocation>
        <location evidence="1">Cytoplasm</location>
    </subcellularLocation>
</comment>
<comment type="similarity">
    <text evidence="1">Belongs to the uridine kinase family.</text>
</comment>
<feature type="chain" id="PRO_1000017861" description="Uridine kinase">
    <location>
        <begin position="1"/>
        <end position="212"/>
    </location>
</feature>
<feature type="binding site" evidence="1">
    <location>
        <begin position="13"/>
        <end position="20"/>
    </location>
    <ligand>
        <name>ATP</name>
        <dbReference type="ChEBI" id="CHEBI:30616"/>
    </ligand>
</feature>